<organism>
    <name type="scientific">Spalax carmeli</name>
    <name type="common">Southern Israeli blind subterranean mole rat</name>
    <dbReference type="NCBI Taxonomy" id="164324"/>
    <lineage>
        <taxon>Eukaryota</taxon>
        <taxon>Metazoa</taxon>
        <taxon>Chordata</taxon>
        <taxon>Craniata</taxon>
        <taxon>Vertebrata</taxon>
        <taxon>Euteleostomi</taxon>
        <taxon>Mammalia</taxon>
        <taxon>Eutheria</taxon>
        <taxon>Euarchontoglires</taxon>
        <taxon>Glires</taxon>
        <taxon>Rodentia</taxon>
        <taxon>Myomorpha</taxon>
        <taxon>Muroidea</taxon>
        <taxon>Spalacidae</taxon>
        <taxon>Spalacinae</taxon>
        <taxon>Spalax</taxon>
    </lineage>
</organism>
<evidence type="ECO:0000250" key="1"/>
<evidence type="ECO:0000250" key="2">
    <source>
        <dbReference type="UniProtKB" id="P01588"/>
    </source>
</evidence>
<evidence type="ECO:0000255" key="3"/>
<evidence type="ECO:0000305" key="4"/>
<dbReference type="EMBL" id="AJ715793">
    <property type="protein sequence ID" value="CAG29398.1"/>
    <property type="molecule type" value="Genomic_DNA"/>
</dbReference>
<dbReference type="SMR" id="Q6H8T1"/>
<dbReference type="GlyCosmos" id="Q6H8T1">
    <property type="glycosylation" value="3 sites, No reported glycans"/>
</dbReference>
<dbReference type="GO" id="GO:0005615">
    <property type="term" value="C:extracellular space"/>
    <property type="evidence" value="ECO:0007669"/>
    <property type="project" value="TreeGrafter"/>
</dbReference>
<dbReference type="GO" id="GO:0005125">
    <property type="term" value="F:cytokine activity"/>
    <property type="evidence" value="ECO:0007669"/>
    <property type="project" value="TreeGrafter"/>
</dbReference>
<dbReference type="GO" id="GO:0005128">
    <property type="term" value="F:erythropoietin receptor binding"/>
    <property type="evidence" value="ECO:0007669"/>
    <property type="project" value="InterPro"/>
</dbReference>
<dbReference type="GO" id="GO:0005179">
    <property type="term" value="F:hormone activity"/>
    <property type="evidence" value="ECO:0007669"/>
    <property type="project" value="UniProtKB-KW"/>
</dbReference>
<dbReference type="GO" id="GO:0030295">
    <property type="term" value="F:protein kinase activator activity"/>
    <property type="evidence" value="ECO:0007669"/>
    <property type="project" value="TreeGrafter"/>
</dbReference>
<dbReference type="GO" id="GO:0043249">
    <property type="term" value="P:erythrocyte maturation"/>
    <property type="evidence" value="ECO:0007669"/>
    <property type="project" value="UniProtKB-KW"/>
</dbReference>
<dbReference type="GO" id="GO:0038162">
    <property type="term" value="P:erythropoietin-mediated signaling pathway"/>
    <property type="evidence" value="ECO:0007669"/>
    <property type="project" value="TreeGrafter"/>
</dbReference>
<dbReference type="GO" id="GO:0008284">
    <property type="term" value="P:positive regulation of cell population proliferation"/>
    <property type="evidence" value="ECO:0007669"/>
    <property type="project" value="TreeGrafter"/>
</dbReference>
<dbReference type="GO" id="GO:0046579">
    <property type="term" value="P:positive regulation of Ras protein signal transduction"/>
    <property type="evidence" value="ECO:0007669"/>
    <property type="project" value="TreeGrafter"/>
</dbReference>
<dbReference type="FunFam" id="1.20.1250.10:FF:000013">
    <property type="entry name" value="Erythropoietin"/>
    <property type="match status" value="1"/>
</dbReference>
<dbReference type="Gene3D" id="1.20.1250.10">
    <property type="match status" value="1"/>
</dbReference>
<dbReference type="InterPro" id="IPR009079">
    <property type="entry name" value="4_helix_cytokine-like_core"/>
</dbReference>
<dbReference type="InterPro" id="IPR019767">
    <property type="entry name" value="EPO/TPO_CS"/>
</dbReference>
<dbReference type="InterPro" id="IPR001323">
    <property type="entry name" value="EPO_TPO"/>
</dbReference>
<dbReference type="InterPro" id="IPR003013">
    <property type="entry name" value="Erythroptn"/>
</dbReference>
<dbReference type="PANTHER" id="PTHR10370">
    <property type="entry name" value="ERYTHROPOIETIN"/>
    <property type="match status" value="1"/>
</dbReference>
<dbReference type="PANTHER" id="PTHR10370:SF0">
    <property type="entry name" value="ERYTHROPOIETIN"/>
    <property type="match status" value="1"/>
</dbReference>
<dbReference type="Pfam" id="PF00758">
    <property type="entry name" value="EPO_TPO"/>
    <property type="match status" value="1"/>
</dbReference>
<dbReference type="PIRSF" id="PIRSF001951">
    <property type="entry name" value="EPO"/>
    <property type="match status" value="1"/>
</dbReference>
<dbReference type="PRINTS" id="PR00272">
    <property type="entry name" value="ERYTHROPTN"/>
</dbReference>
<dbReference type="SUPFAM" id="SSF47266">
    <property type="entry name" value="4-helical cytokines"/>
    <property type="match status" value="1"/>
</dbReference>
<dbReference type="PROSITE" id="PS00817">
    <property type="entry name" value="EPO_TPO"/>
    <property type="match status" value="1"/>
</dbReference>
<name>EPO_SPACA</name>
<protein>
    <recommendedName>
        <fullName>Erythropoietin</fullName>
    </recommendedName>
</protein>
<reference key="1">
    <citation type="journal article" date="2004" name="Proc. Natl. Acad. Sci. U.S.A.">
        <title>Hypoxic stress tolerance of the blind subterranean mole rat: expression of erythropoietin and hypoxia-inducible factor 1 alpha.</title>
        <authorList>
            <person name="Shams I."/>
            <person name="Avivi A."/>
            <person name="Eviatar N."/>
        </authorList>
    </citation>
    <scope>NUCLEOTIDE SEQUENCE [GENOMIC DNA]</scope>
    <source>
        <tissue>Liver</tissue>
    </source>
</reference>
<feature type="signal peptide" evidence="3">
    <location>
        <begin position="1"/>
        <end position="26"/>
    </location>
</feature>
<feature type="chain" id="PRO_0000256700" description="Erythropoietin">
    <location>
        <begin position="27"/>
        <end position="192"/>
    </location>
</feature>
<feature type="glycosylation site" description="N-linked (GlcNAc...) asparagine" evidence="3">
    <location>
        <position position="50"/>
    </location>
</feature>
<feature type="glycosylation site" description="N-linked (GlcNAc...) asparagine" evidence="3">
    <location>
        <position position="64"/>
    </location>
</feature>
<feature type="glycosylation site" description="N-linked (GlcNAc...) asparagine" evidence="3">
    <location>
        <position position="109"/>
    </location>
</feature>
<feature type="disulfide bond" evidence="1">
    <location>
        <begin position="33"/>
        <end position="187"/>
    </location>
</feature>
<keyword id="KW-1015">Disulfide bond</keyword>
<keyword id="KW-0265">Erythrocyte maturation</keyword>
<keyword id="KW-0325">Glycoprotein</keyword>
<keyword id="KW-0372">Hormone</keyword>
<keyword id="KW-0964">Secreted</keyword>
<keyword id="KW-0732">Signal</keyword>
<gene>
    <name type="primary">EPO</name>
</gene>
<comment type="function">
    <text evidence="2">Hormone involved in the regulation of erythrocyte proliferation and differentiation and the maintenance of a physiological level of circulating erythrocyte mass. Binds to EPOR leading to EPOR dimerization and JAK2 activation thereby activating specific downstream effectors, including STAT1 and STAT3.</text>
</comment>
<comment type="subcellular location">
    <subcellularLocation>
        <location evidence="1">Secreted</location>
    </subcellularLocation>
</comment>
<comment type="similarity">
    <text evidence="4">Belongs to the EPO/TPO family.</text>
</comment>
<accession>Q6H8T1</accession>
<sequence>MGVPDCLALPLLVTFLLLSLGLPVLGAPPRLICDSRVLERYILEAKEAENITMGCAEGPRFNENFTVPDTKVNFYAWKTMGVEEQAVEVWQGLSLLFEAILRAQAVLANSSQPSEMLQLHVDKAISGLRSLTSLLRALGAQKEAISPPDTTQVIPLRRFTVDTFCKLFRIYSNFLRGKLKLYTGEACRRGDR</sequence>
<proteinExistence type="inferred from homology"/>